<reference key="1">
    <citation type="submission" date="2007-09" db="EMBL/GenBank/DDBJ databases">
        <title>Complete genome sequence of Rickettsia canadensis.</title>
        <authorList>
            <person name="Madan A."/>
            <person name="Fahey J."/>
            <person name="Helton E."/>
            <person name="Ketteman M."/>
            <person name="Madan A."/>
            <person name="Rodrigues S."/>
            <person name="Sanchez A."/>
            <person name="Whiting M."/>
            <person name="Dasch G."/>
            <person name="Eremeeva M."/>
        </authorList>
    </citation>
    <scope>NUCLEOTIDE SEQUENCE [LARGE SCALE GENOMIC DNA]</scope>
    <source>
        <strain>McKiel</strain>
    </source>
</reference>
<evidence type="ECO:0000255" key="1">
    <source>
        <dbReference type="HAMAP-Rule" id="MF_00374"/>
    </source>
</evidence>
<evidence type="ECO:0000305" key="2"/>
<protein>
    <recommendedName>
        <fullName evidence="1">Large ribosomal subunit protein uL29</fullName>
    </recommendedName>
    <alternativeName>
        <fullName evidence="2">50S ribosomal protein L29</fullName>
    </alternativeName>
</protein>
<feature type="chain" id="PRO_1000007589" description="Large ribosomal subunit protein uL29">
    <location>
        <begin position="1"/>
        <end position="71"/>
    </location>
</feature>
<accession>A8EZK8</accession>
<sequence>MNDLKLLRSKLSTETIEELYKKLNLLKKELFNLRFQQALGELKNTSRFSLVKKSIARIKTELTKRSNSEEY</sequence>
<gene>
    <name evidence="1" type="primary">rpmC</name>
    <name type="ordered locus">A1E_04330</name>
</gene>
<comment type="similarity">
    <text evidence="1">Belongs to the universal ribosomal protein uL29 family.</text>
</comment>
<dbReference type="EMBL" id="CP000409">
    <property type="protein sequence ID" value="ABV73791.1"/>
    <property type="molecule type" value="Genomic_DNA"/>
</dbReference>
<dbReference type="RefSeq" id="WP_012148986.1">
    <property type="nucleotide sequence ID" value="NC_009879.1"/>
</dbReference>
<dbReference type="SMR" id="A8EZK8"/>
<dbReference type="STRING" id="293613.A1E_04330"/>
<dbReference type="KEGG" id="rcm:A1E_04330"/>
<dbReference type="eggNOG" id="COG0255">
    <property type="taxonomic scope" value="Bacteria"/>
</dbReference>
<dbReference type="HOGENOM" id="CLU_158491_1_0_5"/>
<dbReference type="Proteomes" id="UP000007056">
    <property type="component" value="Chromosome"/>
</dbReference>
<dbReference type="GO" id="GO:0022625">
    <property type="term" value="C:cytosolic large ribosomal subunit"/>
    <property type="evidence" value="ECO:0007669"/>
    <property type="project" value="TreeGrafter"/>
</dbReference>
<dbReference type="GO" id="GO:0003735">
    <property type="term" value="F:structural constituent of ribosome"/>
    <property type="evidence" value="ECO:0007669"/>
    <property type="project" value="InterPro"/>
</dbReference>
<dbReference type="GO" id="GO:0006412">
    <property type="term" value="P:translation"/>
    <property type="evidence" value="ECO:0007669"/>
    <property type="project" value="UniProtKB-UniRule"/>
</dbReference>
<dbReference type="CDD" id="cd00427">
    <property type="entry name" value="Ribosomal_L29_HIP"/>
    <property type="match status" value="1"/>
</dbReference>
<dbReference type="FunFam" id="1.10.287.310:FF:000001">
    <property type="entry name" value="50S ribosomal protein L29"/>
    <property type="match status" value="1"/>
</dbReference>
<dbReference type="Gene3D" id="1.10.287.310">
    <property type="match status" value="1"/>
</dbReference>
<dbReference type="HAMAP" id="MF_00374">
    <property type="entry name" value="Ribosomal_uL29"/>
    <property type="match status" value="1"/>
</dbReference>
<dbReference type="InterPro" id="IPR050063">
    <property type="entry name" value="Ribosomal_protein_uL29"/>
</dbReference>
<dbReference type="InterPro" id="IPR001854">
    <property type="entry name" value="Ribosomal_uL29"/>
</dbReference>
<dbReference type="InterPro" id="IPR018254">
    <property type="entry name" value="Ribosomal_uL29_CS"/>
</dbReference>
<dbReference type="InterPro" id="IPR036049">
    <property type="entry name" value="Ribosomal_uL29_sf"/>
</dbReference>
<dbReference type="NCBIfam" id="TIGR00012">
    <property type="entry name" value="L29"/>
    <property type="match status" value="1"/>
</dbReference>
<dbReference type="PANTHER" id="PTHR10916">
    <property type="entry name" value="60S RIBOSOMAL PROTEIN L35/50S RIBOSOMAL PROTEIN L29"/>
    <property type="match status" value="1"/>
</dbReference>
<dbReference type="PANTHER" id="PTHR10916:SF0">
    <property type="entry name" value="LARGE RIBOSOMAL SUBUNIT PROTEIN UL29C"/>
    <property type="match status" value="1"/>
</dbReference>
<dbReference type="Pfam" id="PF00831">
    <property type="entry name" value="Ribosomal_L29"/>
    <property type="match status" value="1"/>
</dbReference>
<dbReference type="SUPFAM" id="SSF46561">
    <property type="entry name" value="Ribosomal protein L29 (L29p)"/>
    <property type="match status" value="1"/>
</dbReference>
<dbReference type="PROSITE" id="PS00579">
    <property type="entry name" value="RIBOSOMAL_L29"/>
    <property type="match status" value="1"/>
</dbReference>
<organism>
    <name type="scientific">Rickettsia canadensis (strain McKiel)</name>
    <dbReference type="NCBI Taxonomy" id="293613"/>
    <lineage>
        <taxon>Bacteria</taxon>
        <taxon>Pseudomonadati</taxon>
        <taxon>Pseudomonadota</taxon>
        <taxon>Alphaproteobacteria</taxon>
        <taxon>Rickettsiales</taxon>
        <taxon>Rickettsiaceae</taxon>
        <taxon>Rickettsieae</taxon>
        <taxon>Rickettsia</taxon>
        <taxon>belli group</taxon>
    </lineage>
</organism>
<proteinExistence type="inferred from homology"/>
<keyword id="KW-0687">Ribonucleoprotein</keyword>
<keyword id="KW-0689">Ribosomal protein</keyword>
<name>RL29_RICCK</name>